<evidence type="ECO:0000255" key="1">
    <source>
        <dbReference type="HAMAP-Rule" id="MF_00054"/>
    </source>
</evidence>
<organism>
    <name type="scientific">Xylella fastidiosa (strain 9a5c)</name>
    <dbReference type="NCBI Taxonomy" id="160492"/>
    <lineage>
        <taxon>Bacteria</taxon>
        <taxon>Pseudomonadati</taxon>
        <taxon>Pseudomonadota</taxon>
        <taxon>Gammaproteobacteria</taxon>
        <taxon>Lysobacterales</taxon>
        <taxon>Lysobacteraceae</taxon>
        <taxon>Xylella</taxon>
    </lineage>
</organism>
<comment type="function">
    <text evidence="1">Catalyzes the GTP-dependent ribosomal translocation step during translation elongation. During this step, the ribosome changes from the pre-translocational (PRE) to the post-translocational (POST) state as the newly formed A-site-bound peptidyl-tRNA and P-site-bound deacylated tRNA move to the P and E sites, respectively. Catalyzes the coordinated movement of the two tRNA molecules, the mRNA and conformational changes in the ribosome.</text>
</comment>
<comment type="subcellular location">
    <subcellularLocation>
        <location evidence="1">Cytoplasm</location>
    </subcellularLocation>
</comment>
<comment type="similarity">
    <text evidence="1">Belongs to the TRAFAC class translation factor GTPase superfamily. Classic translation factor GTPase family. EF-G/EF-2 subfamily.</text>
</comment>
<proteinExistence type="inferred from homology"/>
<gene>
    <name evidence="1" type="primary">fusA</name>
    <name type="ordered locus">XF_2629</name>
</gene>
<accession>Q9PA90</accession>
<name>EFG_XYLFA</name>
<sequence length="705" mass="78057">MVRATPIHRYRNIGIMAHIDAGKTTTSERILFYAGVCHQMGEVHDGAAVMDWMEQEQERGITITSAATTVFWSGMDKSMPQHRFNIIDTPGHVDFTIEVERSLRVLDGAVFVLCAVGGVQPQSETVWRQANKYFVPRMAFVNKMDRTGANFDKVVEQLKARLGAYPVPMQVPIGAEDGFEGVIDLLKMKAIHWDAASQGTVFEYRDIPIELVDKASKARAFMVEAAAEATEELMDKYLNEGELKEQEILQGLRERTLKVEIIPVFCGSAFKNKGVQAMLDGVIHLLPSPADRPPVQGLDEKGNECRCKASDSEPFSALAFKIMTDPFVGSLTFFRVYSGVLNSGDQVYNSVKLKKERVGRILQMHSNQRDEIKEVRAGDIAAAVGLKDVTTGDTLCDQNHIITLERMIFPEPVISMAVEPKTKSDQEKMGMALGRLAQEDPSFRVKTDEESGQTIISGMGELHLDIIVDRMRREFNVEANVGKPQVAYRETIRKSDVKSDYKHVKQSGGKGQYGHVVIEISPMSDVDKQHPDVKGDFLFINEITGGVIPKEFISPIEKGLRETITSGPLAGFPVVGVKVKLVFGSYHDVDSSEMAFKLAASMAFKQGFAKANPVLLEPIMKVEIVSPEDYLGDIMGDVSRRRGVLQGQDDSLSGKVINAMIPLGEMFGYATSLRSMTQGRATFAMEFDHYEEAPANIADTVIKKT</sequence>
<reference key="1">
    <citation type="journal article" date="2000" name="Nature">
        <title>The genome sequence of the plant pathogen Xylella fastidiosa.</title>
        <authorList>
            <person name="Simpson A.J.G."/>
            <person name="Reinach F.C."/>
            <person name="Arruda P."/>
            <person name="Abreu F.A."/>
            <person name="Acencio M."/>
            <person name="Alvarenga R."/>
            <person name="Alves L.M.C."/>
            <person name="Araya J.E."/>
            <person name="Baia G.S."/>
            <person name="Baptista C.S."/>
            <person name="Barros M.H."/>
            <person name="Bonaccorsi E.D."/>
            <person name="Bordin S."/>
            <person name="Bove J.M."/>
            <person name="Briones M.R.S."/>
            <person name="Bueno M.R.P."/>
            <person name="Camargo A.A."/>
            <person name="Camargo L.E.A."/>
            <person name="Carraro D.M."/>
            <person name="Carrer H."/>
            <person name="Colauto N.B."/>
            <person name="Colombo C."/>
            <person name="Costa F.F."/>
            <person name="Costa M.C.R."/>
            <person name="Costa-Neto C.M."/>
            <person name="Coutinho L.L."/>
            <person name="Cristofani M."/>
            <person name="Dias-Neto E."/>
            <person name="Docena C."/>
            <person name="El-Dorry H."/>
            <person name="Facincani A.P."/>
            <person name="Ferreira A.J.S."/>
            <person name="Ferreira V.C.A."/>
            <person name="Ferro J.A."/>
            <person name="Fraga J.S."/>
            <person name="Franca S.C."/>
            <person name="Franco M.C."/>
            <person name="Frohme M."/>
            <person name="Furlan L.R."/>
            <person name="Garnier M."/>
            <person name="Goldman G.H."/>
            <person name="Goldman M.H.S."/>
            <person name="Gomes S.L."/>
            <person name="Gruber A."/>
            <person name="Ho P.L."/>
            <person name="Hoheisel J.D."/>
            <person name="Junqueira M.L."/>
            <person name="Kemper E.L."/>
            <person name="Kitajima J.P."/>
            <person name="Krieger J.E."/>
            <person name="Kuramae E.E."/>
            <person name="Laigret F."/>
            <person name="Lambais M.R."/>
            <person name="Leite L.C.C."/>
            <person name="Lemos E.G.M."/>
            <person name="Lemos M.V.F."/>
            <person name="Lopes S.A."/>
            <person name="Lopes C.R."/>
            <person name="Machado J.A."/>
            <person name="Machado M.A."/>
            <person name="Madeira A.M.B.N."/>
            <person name="Madeira H.M.F."/>
            <person name="Marino C.L."/>
            <person name="Marques M.V."/>
            <person name="Martins E.A.L."/>
            <person name="Martins E.M.F."/>
            <person name="Matsukuma A.Y."/>
            <person name="Menck C.F.M."/>
            <person name="Miracca E.C."/>
            <person name="Miyaki C.Y."/>
            <person name="Monteiro-Vitorello C.B."/>
            <person name="Moon D.H."/>
            <person name="Nagai M.A."/>
            <person name="Nascimento A.L.T.O."/>
            <person name="Netto L.E.S."/>
            <person name="Nhani A. Jr."/>
            <person name="Nobrega F.G."/>
            <person name="Nunes L.R."/>
            <person name="Oliveira M.A."/>
            <person name="de Oliveira M.C."/>
            <person name="de Oliveira R.C."/>
            <person name="Palmieri D.A."/>
            <person name="Paris A."/>
            <person name="Peixoto B.R."/>
            <person name="Pereira G.A.G."/>
            <person name="Pereira H.A. Jr."/>
            <person name="Pesquero J.B."/>
            <person name="Quaggio R.B."/>
            <person name="Roberto P.G."/>
            <person name="Rodrigues V."/>
            <person name="de Rosa A.J.M."/>
            <person name="de Rosa V.E. Jr."/>
            <person name="de Sa R.G."/>
            <person name="Santelli R.V."/>
            <person name="Sawasaki H.E."/>
            <person name="da Silva A.C.R."/>
            <person name="da Silva A.M."/>
            <person name="da Silva F.R."/>
            <person name="Silva W.A. Jr."/>
            <person name="da Silveira J.F."/>
            <person name="Silvestri M.L.Z."/>
            <person name="Siqueira W.J."/>
            <person name="de Souza A.A."/>
            <person name="de Souza A.P."/>
            <person name="Terenzi M.F."/>
            <person name="Truffi D."/>
            <person name="Tsai S.M."/>
            <person name="Tsuhako M.H."/>
            <person name="Vallada H."/>
            <person name="Van Sluys M.A."/>
            <person name="Verjovski-Almeida S."/>
            <person name="Vettore A.L."/>
            <person name="Zago M.A."/>
            <person name="Zatz M."/>
            <person name="Meidanis J."/>
            <person name="Setubal J.C."/>
        </authorList>
    </citation>
    <scope>NUCLEOTIDE SEQUENCE [LARGE SCALE GENOMIC DNA]</scope>
    <source>
        <strain>9a5c</strain>
    </source>
</reference>
<feature type="chain" id="PRO_0000091271" description="Elongation factor G">
    <location>
        <begin position="1"/>
        <end position="705"/>
    </location>
</feature>
<feature type="domain" description="tr-type G">
    <location>
        <begin position="8"/>
        <end position="290"/>
    </location>
</feature>
<feature type="binding site" evidence="1">
    <location>
        <begin position="17"/>
        <end position="24"/>
    </location>
    <ligand>
        <name>GTP</name>
        <dbReference type="ChEBI" id="CHEBI:37565"/>
    </ligand>
</feature>
<feature type="binding site" evidence="1">
    <location>
        <begin position="88"/>
        <end position="92"/>
    </location>
    <ligand>
        <name>GTP</name>
        <dbReference type="ChEBI" id="CHEBI:37565"/>
    </ligand>
</feature>
<feature type="binding site" evidence="1">
    <location>
        <begin position="142"/>
        <end position="145"/>
    </location>
    <ligand>
        <name>GTP</name>
        <dbReference type="ChEBI" id="CHEBI:37565"/>
    </ligand>
</feature>
<dbReference type="EMBL" id="AE003849">
    <property type="protein sequence ID" value="AAF85426.1"/>
    <property type="molecule type" value="Genomic_DNA"/>
</dbReference>
<dbReference type="PIR" id="F82534">
    <property type="entry name" value="F82534"/>
</dbReference>
<dbReference type="RefSeq" id="WP_010895046.1">
    <property type="nucleotide sequence ID" value="NC_002488.3"/>
</dbReference>
<dbReference type="SMR" id="Q9PA90"/>
<dbReference type="STRING" id="160492.XF_2629"/>
<dbReference type="KEGG" id="xfa:XF_2629"/>
<dbReference type="eggNOG" id="COG0480">
    <property type="taxonomic scope" value="Bacteria"/>
</dbReference>
<dbReference type="HOGENOM" id="CLU_002794_4_1_6"/>
<dbReference type="Proteomes" id="UP000000812">
    <property type="component" value="Chromosome"/>
</dbReference>
<dbReference type="GO" id="GO:0005737">
    <property type="term" value="C:cytoplasm"/>
    <property type="evidence" value="ECO:0007669"/>
    <property type="project" value="UniProtKB-SubCell"/>
</dbReference>
<dbReference type="GO" id="GO:0005525">
    <property type="term" value="F:GTP binding"/>
    <property type="evidence" value="ECO:0007669"/>
    <property type="project" value="UniProtKB-UniRule"/>
</dbReference>
<dbReference type="GO" id="GO:0003924">
    <property type="term" value="F:GTPase activity"/>
    <property type="evidence" value="ECO:0007669"/>
    <property type="project" value="InterPro"/>
</dbReference>
<dbReference type="GO" id="GO:0097216">
    <property type="term" value="F:guanosine tetraphosphate binding"/>
    <property type="evidence" value="ECO:0007669"/>
    <property type="project" value="UniProtKB-ARBA"/>
</dbReference>
<dbReference type="GO" id="GO:0003746">
    <property type="term" value="F:translation elongation factor activity"/>
    <property type="evidence" value="ECO:0007669"/>
    <property type="project" value="UniProtKB-UniRule"/>
</dbReference>
<dbReference type="GO" id="GO:0032790">
    <property type="term" value="P:ribosome disassembly"/>
    <property type="evidence" value="ECO:0007669"/>
    <property type="project" value="TreeGrafter"/>
</dbReference>
<dbReference type="CDD" id="cd01886">
    <property type="entry name" value="EF-G"/>
    <property type="match status" value="1"/>
</dbReference>
<dbReference type="CDD" id="cd16262">
    <property type="entry name" value="EFG_III"/>
    <property type="match status" value="1"/>
</dbReference>
<dbReference type="CDD" id="cd01434">
    <property type="entry name" value="EFG_mtEFG1_IV"/>
    <property type="match status" value="1"/>
</dbReference>
<dbReference type="CDD" id="cd03713">
    <property type="entry name" value="EFG_mtEFG_C"/>
    <property type="match status" value="1"/>
</dbReference>
<dbReference type="CDD" id="cd04088">
    <property type="entry name" value="EFG_mtEFG_II"/>
    <property type="match status" value="1"/>
</dbReference>
<dbReference type="FunFam" id="2.40.30.10:FF:000006">
    <property type="entry name" value="Elongation factor G"/>
    <property type="match status" value="1"/>
</dbReference>
<dbReference type="FunFam" id="3.30.230.10:FF:000003">
    <property type="entry name" value="Elongation factor G"/>
    <property type="match status" value="1"/>
</dbReference>
<dbReference type="FunFam" id="3.30.70.240:FF:000001">
    <property type="entry name" value="Elongation factor G"/>
    <property type="match status" value="1"/>
</dbReference>
<dbReference type="FunFam" id="3.30.70.870:FF:000001">
    <property type="entry name" value="Elongation factor G"/>
    <property type="match status" value="1"/>
</dbReference>
<dbReference type="FunFam" id="3.40.50.300:FF:000029">
    <property type="entry name" value="Elongation factor G"/>
    <property type="match status" value="1"/>
</dbReference>
<dbReference type="Gene3D" id="3.30.230.10">
    <property type="match status" value="1"/>
</dbReference>
<dbReference type="Gene3D" id="3.30.70.240">
    <property type="match status" value="1"/>
</dbReference>
<dbReference type="Gene3D" id="3.30.70.870">
    <property type="entry name" value="Elongation Factor G (Translational Gtpase), domain 3"/>
    <property type="match status" value="1"/>
</dbReference>
<dbReference type="Gene3D" id="3.40.50.300">
    <property type="entry name" value="P-loop containing nucleotide triphosphate hydrolases"/>
    <property type="match status" value="1"/>
</dbReference>
<dbReference type="Gene3D" id="2.40.30.10">
    <property type="entry name" value="Translation factors"/>
    <property type="match status" value="1"/>
</dbReference>
<dbReference type="HAMAP" id="MF_00054_B">
    <property type="entry name" value="EF_G_EF_2_B"/>
    <property type="match status" value="1"/>
</dbReference>
<dbReference type="InterPro" id="IPR041095">
    <property type="entry name" value="EFG_II"/>
</dbReference>
<dbReference type="InterPro" id="IPR009022">
    <property type="entry name" value="EFG_III"/>
</dbReference>
<dbReference type="InterPro" id="IPR035647">
    <property type="entry name" value="EFG_III/V"/>
</dbReference>
<dbReference type="InterPro" id="IPR047872">
    <property type="entry name" value="EFG_IV"/>
</dbReference>
<dbReference type="InterPro" id="IPR035649">
    <property type="entry name" value="EFG_V"/>
</dbReference>
<dbReference type="InterPro" id="IPR000640">
    <property type="entry name" value="EFG_V-like"/>
</dbReference>
<dbReference type="InterPro" id="IPR004161">
    <property type="entry name" value="EFTu-like_2"/>
</dbReference>
<dbReference type="InterPro" id="IPR031157">
    <property type="entry name" value="G_TR_CS"/>
</dbReference>
<dbReference type="InterPro" id="IPR027417">
    <property type="entry name" value="P-loop_NTPase"/>
</dbReference>
<dbReference type="InterPro" id="IPR020568">
    <property type="entry name" value="Ribosomal_Su5_D2-typ_SF"/>
</dbReference>
<dbReference type="InterPro" id="IPR014721">
    <property type="entry name" value="Ribsml_uS5_D2-typ_fold_subgr"/>
</dbReference>
<dbReference type="InterPro" id="IPR005225">
    <property type="entry name" value="Small_GTP-bd"/>
</dbReference>
<dbReference type="InterPro" id="IPR000795">
    <property type="entry name" value="T_Tr_GTP-bd_dom"/>
</dbReference>
<dbReference type="InterPro" id="IPR009000">
    <property type="entry name" value="Transl_B-barrel_sf"/>
</dbReference>
<dbReference type="InterPro" id="IPR004540">
    <property type="entry name" value="Transl_elong_EFG/EF2"/>
</dbReference>
<dbReference type="InterPro" id="IPR005517">
    <property type="entry name" value="Transl_elong_EFG/EF2_IV"/>
</dbReference>
<dbReference type="NCBIfam" id="TIGR00484">
    <property type="entry name" value="EF-G"/>
    <property type="match status" value="1"/>
</dbReference>
<dbReference type="NCBIfam" id="NF009381">
    <property type="entry name" value="PRK12740.1-5"/>
    <property type="match status" value="1"/>
</dbReference>
<dbReference type="NCBIfam" id="TIGR00231">
    <property type="entry name" value="small_GTP"/>
    <property type="match status" value="1"/>
</dbReference>
<dbReference type="PANTHER" id="PTHR43261:SF1">
    <property type="entry name" value="RIBOSOME-RELEASING FACTOR 2, MITOCHONDRIAL"/>
    <property type="match status" value="1"/>
</dbReference>
<dbReference type="PANTHER" id="PTHR43261">
    <property type="entry name" value="TRANSLATION ELONGATION FACTOR G-RELATED"/>
    <property type="match status" value="1"/>
</dbReference>
<dbReference type="Pfam" id="PF00679">
    <property type="entry name" value="EFG_C"/>
    <property type="match status" value="1"/>
</dbReference>
<dbReference type="Pfam" id="PF14492">
    <property type="entry name" value="EFG_III"/>
    <property type="match status" value="1"/>
</dbReference>
<dbReference type="Pfam" id="PF03764">
    <property type="entry name" value="EFG_IV"/>
    <property type="match status" value="1"/>
</dbReference>
<dbReference type="Pfam" id="PF00009">
    <property type="entry name" value="GTP_EFTU"/>
    <property type="match status" value="1"/>
</dbReference>
<dbReference type="Pfam" id="PF03144">
    <property type="entry name" value="GTP_EFTU_D2"/>
    <property type="match status" value="1"/>
</dbReference>
<dbReference type="PRINTS" id="PR00315">
    <property type="entry name" value="ELONGATNFCT"/>
</dbReference>
<dbReference type="SMART" id="SM00838">
    <property type="entry name" value="EFG_C"/>
    <property type="match status" value="1"/>
</dbReference>
<dbReference type="SMART" id="SM00889">
    <property type="entry name" value="EFG_IV"/>
    <property type="match status" value="1"/>
</dbReference>
<dbReference type="SUPFAM" id="SSF54980">
    <property type="entry name" value="EF-G C-terminal domain-like"/>
    <property type="match status" value="2"/>
</dbReference>
<dbReference type="SUPFAM" id="SSF52540">
    <property type="entry name" value="P-loop containing nucleoside triphosphate hydrolases"/>
    <property type="match status" value="1"/>
</dbReference>
<dbReference type="SUPFAM" id="SSF54211">
    <property type="entry name" value="Ribosomal protein S5 domain 2-like"/>
    <property type="match status" value="1"/>
</dbReference>
<dbReference type="SUPFAM" id="SSF50447">
    <property type="entry name" value="Translation proteins"/>
    <property type="match status" value="1"/>
</dbReference>
<dbReference type="PROSITE" id="PS00301">
    <property type="entry name" value="G_TR_1"/>
    <property type="match status" value="1"/>
</dbReference>
<dbReference type="PROSITE" id="PS51722">
    <property type="entry name" value="G_TR_2"/>
    <property type="match status" value="1"/>
</dbReference>
<keyword id="KW-0963">Cytoplasm</keyword>
<keyword id="KW-0251">Elongation factor</keyword>
<keyword id="KW-0342">GTP-binding</keyword>
<keyword id="KW-0547">Nucleotide-binding</keyword>
<keyword id="KW-0648">Protein biosynthesis</keyword>
<protein>
    <recommendedName>
        <fullName evidence="1">Elongation factor G</fullName>
        <shortName evidence="1">EF-G</shortName>
    </recommendedName>
</protein>